<name>Y995_HELPJ</name>
<organism>
    <name type="scientific">Helicobacter pylori (strain J99 / ATCC 700824)</name>
    <name type="common">Campylobacter pylori J99</name>
    <dbReference type="NCBI Taxonomy" id="85963"/>
    <lineage>
        <taxon>Bacteria</taxon>
        <taxon>Pseudomonadati</taxon>
        <taxon>Campylobacterota</taxon>
        <taxon>Epsilonproteobacteria</taxon>
        <taxon>Campylobacterales</taxon>
        <taxon>Helicobacteraceae</taxon>
        <taxon>Helicobacter</taxon>
    </lineage>
</organism>
<protein>
    <recommendedName>
        <fullName>Uncharacterized protein jhp_0995</fullName>
    </recommendedName>
</protein>
<dbReference type="EMBL" id="AE001439">
    <property type="protein sequence ID" value="AAD06580.1"/>
    <property type="molecule type" value="Genomic_DNA"/>
</dbReference>
<dbReference type="RefSeq" id="WP_000051172.1">
    <property type="nucleotide sequence ID" value="NZ_CP011330.1"/>
</dbReference>
<dbReference type="SMR" id="P64660"/>
<dbReference type="KEGG" id="hpj:jhp_0995"/>
<dbReference type="PATRIC" id="fig|85963.30.peg.1596"/>
<dbReference type="Proteomes" id="UP000000804">
    <property type="component" value="Chromosome"/>
</dbReference>
<accession>P64660</accession>
<accession>O25148</accession>
<proteinExistence type="predicted"/>
<feature type="chain" id="PRO_0000128684" description="Uncharacterized protein jhp_0995">
    <location>
        <begin position="1"/>
        <end position="78"/>
    </location>
</feature>
<gene>
    <name type="ordered locus">jhp_0995</name>
</gene>
<reference key="1">
    <citation type="journal article" date="1999" name="Nature">
        <title>Genomic sequence comparison of two unrelated isolates of the human gastric pathogen Helicobacter pylori.</title>
        <authorList>
            <person name="Alm R.A."/>
            <person name="Ling L.-S.L."/>
            <person name="Moir D.T."/>
            <person name="King B.L."/>
            <person name="Brown E.D."/>
            <person name="Doig P.C."/>
            <person name="Smith D.R."/>
            <person name="Noonan B."/>
            <person name="Guild B.C."/>
            <person name="deJonge B.L."/>
            <person name="Carmel G."/>
            <person name="Tummino P.J."/>
            <person name="Caruso A."/>
            <person name="Uria-Nickelsen M."/>
            <person name="Mills D.M."/>
            <person name="Ives C."/>
            <person name="Gibson R."/>
            <person name="Merberg D."/>
            <person name="Mills S.D."/>
            <person name="Jiang Q."/>
            <person name="Taylor D.E."/>
            <person name="Vovis G.F."/>
            <person name="Trust T.J."/>
        </authorList>
    </citation>
    <scope>NUCLEOTIDE SEQUENCE [LARGE SCALE GENOMIC DNA]</scope>
    <source>
        <strain>J99 / ATCC 700824</strain>
    </source>
</reference>
<sequence length="78" mass="9297">MSLENDSLEITYLGKRYKISLNNTFSDEMKRTLKERFHNQELNALELLKDYLHESCQNEYLHNELQKLLEKISSCSIT</sequence>